<reference key="1">
    <citation type="journal article" date="2005" name="Proc. Natl. Acad. Sci. U.S.A.">
        <title>The genome of Salinibacter ruber: convergence and gene exchange among hyperhalophilic bacteria and archaea.</title>
        <authorList>
            <person name="Mongodin E.F."/>
            <person name="Nelson K.E."/>
            <person name="Daugherty S."/>
            <person name="DeBoy R.T."/>
            <person name="Wister J."/>
            <person name="Khouri H."/>
            <person name="Weidman J."/>
            <person name="Walsh D.A."/>
            <person name="Papke R.T."/>
            <person name="Sanchez Perez G."/>
            <person name="Sharma A.K."/>
            <person name="Nesbo C.L."/>
            <person name="MacLeod D."/>
            <person name="Bapteste E."/>
            <person name="Doolittle W.F."/>
            <person name="Charlebois R.L."/>
            <person name="Legault B."/>
            <person name="Rodriguez-Valera F."/>
        </authorList>
    </citation>
    <scope>NUCLEOTIDE SEQUENCE [LARGE SCALE GENOMIC DNA]</scope>
    <source>
        <strain>DSM 13855 / CECT 5946 / M31</strain>
    </source>
</reference>
<dbReference type="EMBL" id="CP000159">
    <property type="protein sequence ID" value="ABC43920.1"/>
    <property type="molecule type" value="Genomic_DNA"/>
</dbReference>
<dbReference type="RefSeq" id="WP_011404504.1">
    <property type="nucleotide sequence ID" value="NC_007677.1"/>
</dbReference>
<dbReference type="RefSeq" id="YP_445878.1">
    <property type="nucleotide sequence ID" value="NC_007677.1"/>
</dbReference>
<dbReference type="SMR" id="Q2S1Q3"/>
<dbReference type="STRING" id="309807.SRU_1760"/>
<dbReference type="EnsemblBacteria" id="ABC43920">
    <property type="protein sequence ID" value="ABC43920"/>
    <property type="gene ID" value="SRU_1760"/>
</dbReference>
<dbReference type="GeneID" id="83728689"/>
<dbReference type="KEGG" id="sru:SRU_1760"/>
<dbReference type="PATRIC" id="fig|309807.25.peg.1827"/>
<dbReference type="eggNOG" id="COG0244">
    <property type="taxonomic scope" value="Bacteria"/>
</dbReference>
<dbReference type="HOGENOM" id="CLU_092227_0_0_10"/>
<dbReference type="OrthoDB" id="1523686at2"/>
<dbReference type="Proteomes" id="UP000008674">
    <property type="component" value="Chromosome"/>
</dbReference>
<dbReference type="GO" id="GO:0015934">
    <property type="term" value="C:large ribosomal subunit"/>
    <property type="evidence" value="ECO:0007669"/>
    <property type="project" value="InterPro"/>
</dbReference>
<dbReference type="GO" id="GO:0070180">
    <property type="term" value="F:large ribosomal subunit rRNA binding"/>
    <property type="evidence" value="ECO:0007669"/>
    <property type="project" value="UniProtKB-UniRule"/>
</dbReference>
<dbReference type="GO" id="GO:0003735">
    <property type="term" value="F:structural constituent of ribosome"/>
    <property type="evidence" value="ECO:0007669"/>
    <property type="project" value="InterPro"/>
</dbReference>
<dbReference type="GO" id="GO:0006412">
    <property type="term" value="P:translation"/>
    <property type="evidence" value="ECO:0007669"/>
    <property type="project" value="UniProtKB-UniRule"/>
</dbReference>
<dbReference type="CDD" id="cd05797">
    <property type="entry name" value="Ribosomal_L10"/>
    <property type="match status" value="1"/>
</dbReference>
<dbReference type="Gene3D" id="3.30.70.1730">
    <property type="match status" value="1"/>
</dbReference>
<dbReference type="Gene3D" id="6.10.250.290">
    <property type="match status" value="1"/>
</dbReference>
<dbReference type="HAMAP" id="MF_00362">
    <property type="entry name" value="Ribosomal_uL10"/>
    <property type="match status" value="1"/>
</dbReference>
<dbReference type="InterPro" id="IPR001790">
    <property type="entry name" value="Ribosomal_uL10"/>
</dbReference>
<dbReference type="InterPro" id="IPR043141">
    <property type="entry name" value="Ribosomal_uL10-like_sf"/>
</dbReference>
<dbReference type="InterPro" id="IPR022973">
    <property type="entry name" value="Ribosomal_uL10_bac"/>
</dbReference>
<dbReference type="InterPro" id="IPR047865">
    <property type="entry name" value="Ribosomal_uL10_bac_type"/>
</dbReference>
<dbReference type="InterPro" id="IPR002363">
    <property type="entry name" value="Ribosomal_uL10_CS_bac"/>
</dbReference>
<dbReference type="NCBIfam" id="NF000955">
    <property type="entry name" value="PRK00099.1-1"/>
    <property type="match status" value="1"/>
</dbReference>
<dbReference type="PANTHER" id="PTHR11560">
    <property type="entry name" value="39S RIBOSOMAL PROTEIN L10, MITOCHONDRIAL"/>
    <property type="match status" value="1"/>
</dbReference>
<dbReference type="Pfam" id="PF00466">
    <property type="entry name" value="Ribosomal_L10"/>
    <property type="match status" value="1"/>
</dbReference>
<dbReference type="SUPFAM" id="SSF160369">
    <property type="entry name" value="Ribosomal protein L10-like"/>
    <property type="match status" value="1"/>
</dbReference>
<dbReference type="PROSITE" id="PS01109">
    <property type="entry name" value="RIBOSOMAL_L10"/>
    <property type="match status" value="1"/>
</dbReference>
<accession>Q2S1Q3</accession>
<organism>
    <name type="scientific">Salinibacter ruber (strain DSM 13855 / M31)</name>
    <dbReference type="NCBI Taxonomy" id="309807"/>
    <lineage>
        <taxon>Bacteria</taxon>
        <taxon>Pseudomonadati</taxon>
        <taxon>Rhodothermota</taxon>
        <taxon>Rhodothermia</taxon>
        <taxon>Rhodothermales</taxon>
        <taxon>Salinibacteraceae</taxon>
        <taxon>Salinibacter</taxon>
    </lineage>
</organism>
<comment type="function">
    <text evidence="1">Forms part of the ribosomal stalk, playing a central role in the interaction of the ribosome with GTP-bound translation factors.</text>
</comment>
<comment type="subunit">
    <text evidence="1">Part of the ribosomal stalk of the 50S ribosomal subunit. The N-terminus interacts with L11 and the large rRNA to form the base of the stalk. The C-terminus forms an elongated spine to which L12 dimers bind in a sequential fashion forming a multimeric L10(L12)X complex.</text>
</comment>
<comment type="similarity">
    <text evidence="1">Belongs to the universal ribosomal protein uL10 family.</text>
</comment>
<protein>
    <recommendedName>
        <fullName evidence="1">Large ribosomal subunit protein uL10</fullName>
    </recommendedName>
    <alternativeName>
        <fullName evidence="2">50S ribosomal protein L10</fullName>
    </alternativeName>
</protein>
<name>RL10_SALRD</name>
<proteinExistence type="inferred from homology"/>
<keyword id="KW-1185">Reference proteome</keyword>
<keyword id="KW-0687">Ribonucleoprotein</keyword>
<keyword id="KW-0689">Ribosomal protein</keyword>
<keyword id="KW-0694">RNA-binding</keyword>
<keyword id="KW-0699">rRNA-binding</keyword>
<sequence>MSKNRAEKAEIIEEIGEKLNEYPIIYLTNFEGLTVAQSNDLRGRFREAGVEYQVTKNTLARLALDRIEGKDALEEFFAGPTAIAFSEDPAKPARVLQDFLEEEELGRPELKVAWIEGDMYDDPEALDTLAELKSREELIGEVIGRLLAPAQNLVGGLQGPGQRLSGLLQSLADEEEDE</sequence>
<feature type="chain" id="PRO_0000234882" description="Large ribosomal subunit protein uL10">
    <location>
        <begin position="1"/>
        <end position="178"/>
    </location>
</feature>
<gene>
    <name evidence="1" type="primary">rplJ</name>
    <name type="ordered locus">SRU_1760</name>
</gene>
<evidence type="ECO:0000255" key="1">
    <source>
        <dbReference type="HAMAP-Rule" id="MF_00362"/>
    </source>
</evidence>
<evidence type="ECO:0000305" key="2"/>